<gene>
    <name evidence="2" type="primary">glnA</name>
    <name type="ordered locus">SERP0876</name>
</gene>
<proteinExistence type="inferred from homology"/>
<reference key="1">
    <citation type="journal article" date="2005" name="J. Bacteriol.">
        <title>Insights on evolution of virulence and resistance from the complete genome analysis of an early methicillin-resistant Staphylococcus aureus strain and a biofilm-producing methicillin-resistant Staphylococcus epidermidis strain.</title>
        <authorList>
            <person name="Gill S.R."/>
            <person name="Fouts D.E."/>
            <person name="Archer G.L."/>
            <person name="Mongodin E.F."/>
            <person name="DeBoy R.T."/>
            <person name="Ravel J."/>
            <person name="Paulsen I.T."/>
            <person name="Kolonay J.F."/>
            <person name="Brinkac L.M."/>
            <person name="Beanan M.J."/>
            <person name="Dodson R.J."/>
            <person name="Daugherty S.C."/>
            <person name="Madupu R."/>
            <person name="Angiuoli S.V."/>
            <person name="Durkin A.S."/>
            <person name="Haft D.H."/>
            <person name="Vamathevan J.J."/>
            <person name="Khouri H."/>
            <person name="Utterback T.R."/>
            <person name="Lee C."/>
            <person name="Dimitrov G."/>
            <person name="Jiang L."/>
            <person name="Qin H."/>
            <person name="Weidman J."/>
            <person name="Tran K."/>
            <person name="Kang K.H."/>
            <person name="Hance I.R."/>
            <person name="Nelson K.E."/>
            <person name="Fraser C.M."/>
        </authorList>
    </citation>
    <scope>NUCLEOTIDE SEQUENCE [LARGE SCALE GENOMIC DNA]</scope>
    <source>
        <strain>ATCC 35984 / DSM 28319 / BCRC 17069 / CCUG 31568 / BM 3577 / RP62A</strain>
    </source>
</reference>
<dbReference type="EC" id="6.3.1.2" evidence="2"/>
<dbReference type="EMBL" id="CP000029">
    <property type="protein sequence ID" value="AAW54283.1"/>
    <property type="molecule type" value="Genomic_DNA"/>
</dbReference>
<dbReference type="RefSeq" id="WP_001829492.1">
    <property type="nucleotide sequence ID" value="NC_002976.3"/>
</dbReference>
<dbReference type="SMR" id="Q5HPN2"/>
<dbReference type="STRING" id="176279.SERP0876"/>
<dbReference type="GeneID" id="50018879"/>
<dbReference type="KEGG" id="ser:SERP0876"/>
<dbReference type="eggNOG" id="COG0174">
    <property type="taxonomic scope" value="Bacteria"/>
</dbReference>
<dbReference type="HOGENOM" id="CLU_017290_1_3_9"/>
<dbReference type="Proteomes" id="UP000000531">
    <property type="component" value="Chromosome"/>
</dbReference>
<dbReference type="GO" id="GO:0005737">
    <property type="term" value="C:cytoplasm"/>
    <property type="evidence" value="ECO:0007669"/>
    <property type="project" value="UniProtKB-SubCell"/>
</dbReference>
<dbReference type="GO" id="GO:0005524">
    <property type="term" value="F:ATP binding"/>
    <property type="evidence" value="ECO:0007669"/>
    <property type="project" value="UniProtKB-KW"/>
</dbReference>
<dbReference type="GO" id="GO:0004356">
    <property type="term" value="F:glutamine synthetase activity"/>
    <property type="evidence" value="ECO:0007669"/>
    <property type="project" value="UniProtKB-EC"/>
</dbReference>
<dbReference type="GO" id="GO:0046872">
    <property type="term" value="F:metal ion binding"/>
    <property type="evidence" value="ECO:0007669"/>
    <property type="project" value="UniProtKB-KW"/>
</dbReference>
<dbReference type="GO" id="GO:0006542">
    <property type="term" value="P:glutamine biosynthetic process"/>
    <property type="evidence" value="ECO:0007669"/>
    <property type="project" value="InterPro"/>
</dbReference>
<dbReference type="FunFam" id="3.10.20.70:FF:000005">
    <property type="entry name" value="Glutamine synthetase"/>
    <property type="match status" value="1"/>
</dbReference>
<dbReference type="FunFam" id="3.30.590.10:FF:000003">
    <property type="entry name" value="Glutamine synthetase 2"/>
    <property type="match status" value="1"/>
</dbReference>
<dbReference type="Gene3D" id="3.10.20.70">
    <property type="entry name" value="Glutamine synthetase, N-terminal domain"/>
    <property type="match status" value="1"/>
</dbReference>
<dbReference type="Gene3D" id="3.30.590.10">
    <property type="entry name" value="Glutamine synthetase/guanido kinase, catalytic domain"/>
    <property type="match status" value="1"/>
</dbReference>
<dbReference type="InterPro" id="IPR008147">
    <property type="entry name" value="Gln_synt_N"/>
</dbReference>
<dbReference type="InterPro" id="IPR036651">
    <property type="entry name" value="Gln_synt_N_sf"/>
</dbReference>
<dbReference type="InterPro" id="IPR014746">
    <property type="entry name" value="Gln_synth/guanido_kin_cat_dom"/>
</dbReference>
<dbReference type="InterPro" id="IPR008146">
    <property type="entry name" value="Gln_synth_cat_dom"/>
</dbReference>
<dbReference type="InterPro" id="IPR027303">
    <property type="entry name" value="Gln_synth_gly_rich_site"/>
</dbReference>
<dbReference type="InterPro" id="IPR004809">
    <property type="entry name" value="Gln_synth_I"/>
</dbReference>
<dbReference type="InterPro" id="IPR027302">
    <property type="entry name" value="Gln_synth_N_conserv_site"/>
</dbReference>
<dbReference type="NCBIfam" id="TIGR00653">
    <property type="entry name" value="GlnA"/>
    <property type="match status" value="1"/>
</dbReference>
<dbReference type="PANTHER" id="PTHR43785">
    <property type="entry name" value="GAMMA-GLUTAMYLPUTRESCINE SYNTHETASE"/>
    <property type="match status" value="1"/>
</dbReference>
<dbReference type="PANTHER" id="PTHR43785:SF12">
    <property type="entry name" value="TYPE-1 GLUTAMINE SYNTHETASE 2"/>
    <property type="match status" value="1"/>
</dbReference>
<dbReference type="Pfam" id="PF00120">
    <property type="entry name" value="Gln-synt_C"/>
    <property type="match status" value="1"/>
</dbReference>
<dbReference type="Pfam" id="PF03951">
    <property type="entry name" value="Gln-synt_N"/>
    <property type="match status" value="1"/>
</dbReference>
<dbReference type="SMART" id="SM01230">
    <property type="entry name" value="Gln-synt_C"/>
    <property type="match status" value="1"/>
</dbReference>
<dbReference type="SUPFAM" id="SSF54368">
    <property type="entry name" value="Glutamine synthetase, N-terminal domain"/>
    <property type="match status" value="1"/>
</dbReference>
<dbReference type="SUPFAM" id="SSF55931">
    <property type="entry name" value="Glutamine synthetase/guanido kinase"/>
    <property type="match status" value="1"/>
</dbReference>
<dbReference type="PROSITE" id="PS00180">
    <property type="entry name" value="GLNA_1"/>
    <property type="match status" value="1"/>
</dbReference>
<dbReference type="PROSITE" id="PS00181">
    <property type="entry name" value="GLNA_ATP"/>
    <property type="match status" value="1"/>
</dbReference>
<dbReference type="PROSITE" id="PS51986">
    <property type="entry name" value="GS_BETA_GRASP"/>
    <property type="match status" value="1"/>
</dbReference>
<dbReference type="PROSITE" id="PS51987">
    <property type="entry name" value="GS_CATALYTIC"/>
    <property type="match status" value="1"/>
</dbReference>
<keyword id="KW-0067">ATP-binding</keyword>
<keyword id="KW-0963">Cytoplasm</keyword>
<keyword id="KW-0436">Ligase</keyword>
<keyword id="KW-0460">Magnesium</keyword>
<keyword id="KW-0479">Metal-binding</keyword>
<keyword id="KW-0547">Nucleotide-binding</keyword>
<keyword id="KW-1185">Reference proteome</keyword>
<name>GLN1A_STAEQ</name>
<feature type="chain" id="PRO_0000153265" description="Glutamine synthetase">
    <location>
        <begin position="1"/>
        <end position="446"/>
    </location>
</feature>
<feature type="domain" description="GS beta-grasp" evidence="5">
    <location>
        <begin position="18"/>
        <end position="103"/>
    </location>
</feature>
<feature type="domain" description="GS catalytic" evidence="6">
    <location>
        <begin position="110"/>
        <end position="446"/>
    </location>
</feature>
<feature type="binding site" evidence="2">
    <location>
        <position position="134"/>
    </location>
    <ligand>
        <name>Mg(2+)</name>
        <dbReference type="ChEBI" id="CHEBI:18420"/>
        <label>1</label>
    </ligand>
</feature>
<feature type="binding site" evidence="2">
    <location>
        <position position="136"/>
    </location>
    <ligand>
        <name>Mg(2+)</name>
        <dbReference type="ChEBI" id="CHEBI:18420"/>
        <label>2</label>
    </ligand>
</feature>
<feature type="binding site" evidence="4">
    <location>
        <position position="186"/>
    </location>
    <ligand>
        <name>ATP</name>
        <dbReference type="ChEBI" id="CHEBI:30616"/>
    </ligand>
</feature>
<feature type="binding site" evidence="2">
    <location>
        <position position="191"/>
    </location>
    <ligand>
        <name>Mg(2+)</name>
        <dbReference type="ChEBI" id="CHEBI:18420"/>
        <label>2</label>
    </ligand>
</feature>
<feature type="binding site" evidence="2">
    <location>
        <position position="198"/>
    </location>
    <ligand>
        <name>Mg(2+)</name>
        <dbReference type="ChEBI" id="CHEBI:18420"/>
        <label>2</label>
    </ligand>
</feature>
<feature type="binding site" evidence="4">
    <location>
        <begin position="242"/>
        <end position="243"/>
    </location>
    <ligand>
        <name>L-glutamate</name>
        <dbReference type="ChEBI" id="CHEBI:29985"/>
    </ligand>
</feature>
<feature type="binding site" evidence="2">
    <location>
        <position position="243"/>
    </location>
    <ligand>
        <name>L-glutamate</name>
        <dbReference type="ChEBI" id="CHEBI:29985"/>
    </ligand>
</feature>
<feature type="binding site" evidence="2">
    <location>
        <position position="247"/>
    </location>
    <ligand>
        <name>Mg(2+)</name>
        <dbReference type="ChEBI" id="CHEBI:18420"/>
        <label>1</label>
    </ligand>
</feature>
<feature type="binding site" evidence="3">
    <location>
        <position position="251"/>
    </location>
    <ligand>
        <name>ATP</name>
        <dbReference type="ChEBI" id="CHEBI:30616"/>
    </ligand>
</feature>
<feature type="binding site" evidence="1">
    <location>
        <position position="300"/>
    </location>
    <ligand>
        <name>L-glutamate</name>
        <dbReference type="ChEBI" id="CHEBI:29985"/>
    </ligand>
</feature>
<feature type="binding site" evidence="1">
    <location>
        <position position="306"/>
    </location>
    <ligand>
        <name>L-glutamate</name>
        <dbReference type="ChEBI" id="CHEBI:29985"/>
    </ligand>
</feature>
<feature type="binding site" evidence="4">
    <location>
        <position position="318"/>
    </location>
    <ligand>
        <name>ATP</name>
        <dbReference type="ChEBI" id="CHEBI:30616"/>
    </ligand>
</feature>
<feature type="binding site" evidence="4">
    <location>
        <position position="318"/>
    </location>
    <ligand>
        <name>L-glutamate</name>
        <dbReference type="ChEBI" id="CHEBI:29985"/>
    </ligand>
</feature>
<feature type="binding site" evidence="4">
    <location>
        <position position="323"/>
    </location>
    <ligand>
        <name>ATP</name>
        <dbReference type="ChEBI" id="CHEBI:30616"/>
    </ligand>
</feature>
<feature type="binding site" evidence="2">
    <location>
        <position position="335"/>
    </location>
    <ligand>
        <name>Mg(2+)</name>
        <dbReference type="ChEBI" id="CHEBI:18420"/>
        <label>1</label>
    </ligand>
</feature>
<feature type="binding site" evidence="1">
    <location>
        <position position="337"/>
    </location>
    <ligand>
        <name>L-glutamate</name>
        <dbReference type="ChEBI" id="CHEBI:29985"/>
    </ligand>
</feature>
<feature type="site" description="Important for inhibition by glutamine" evidence="2">
    <location>
        <position position="64"/>
    </location>
</feature>
<comment type="function">
    <text evidence="2">Glutamine synthetase (GS) is an unusual multitasking protein that functions as an enzyme, a transcription coregulator, and a chaperone in ammonium assimilation and in the regulation of genes involved in nitrogen metabolism. It catalyzes the ATP-dependent biosynthesis of glutamine from glutamate and ammonia. Feedback-inhibited GlnA also interacts with and regulates the activity of the transcriptional regulator TnrA. During nitrogen limitation, TnrA is in its DNA-binding active state and turns on the transcription of genes required for nitrogen assimilation. Under conditions of nitrogen excess, feedback-inhibited GlnA forms a stable complex with TnrA, which inhibits its DNA-binding activity. In contrast, feedback-inhibited GlnA acts as a chaperone to stabilize the DNA-binding activity of GlnR, which represses the transcription of nitrogen assimilation genes.</text>
</comment>
<comment type="catalytic activity">
    <reaction evidence="2">
        <text>L-glutamate + NH4(+) + ATP = L-glutamine + ADP + phosphate + H(+)</text>
        <dbReference type="Rhea" id="RHEA:16169"/>
        <dbReference type="ChEBI" id="CHEBI:15378"/>
        <dbReference type="ChEBI" id="CHEBI:28938"/>
        <dbReference type="ChEBI" id="CHEBI:29985"/>
        <dbReference type="ChEBI" id="CHEBI:30616"/>
        <dbReference type="ChEBI" id="CHEBI:43474"/>
        <dbReference type="ChEBI" id="CHEBI:58359"/>
        <dbReference type="ChEBI" id="CHEBI:456216"/>
        <dbReference type="EC" id="6.3.1.2"/>
    </reaction>
</comment>
<comment type="cofactor">
    <cofactor evidence="2">
        <name>Mg(2+)</name>
        <dbReference type="ChEBI" id="CHEBI:18420"/>
    </cofactor>
    <text evidence="2">Binds 2 Mg(2+) ions per subunit.</text>
</comment>
<comment type="activity regulation">
    <text evidence="2">Inhibited by glutamine.</text>
</comment>
<comment type="subunit">
    <text evidence="2">Oligomer of 12 subunits arranged in the form of two hexagons. In its feedback-inhibited form, interacts with TnrA in order to block its DNA-binding activity.</text>
</comment>
<comment type="subcellular location">
    <subcellularLocation>
        <location evidence="2">Cytoplasm</location>
    </subcellularLocation>
</comment>
<comment type="similarity">
    <text evidence="7">Belongs to the glutamine synthetase family.</text>
</comment>
<protein>
    <recommendedName>
        <fullName evidence="2">Glutamine synthetase</fullName>
        <shortName evidence="2">GS</shortName>
        <ecNumber evidence="2">6.3.1.2</ecNumber>
    </recommendedName>
    <alternativeName>
        <fullName evidence="2">Glutamate--ammonia ligase</fullName>
    </alternativeName>
    <alternativeName>
        <fullName evidence="2">Glutamine synthetase I alpha</fullName>
        <shortName evidence="2">GSI alpha</shortName>
    </alternativeName>
</protein>
<evidence type="ECO:0000250" key="1">
    <source>
        <dbReference type="UniProtKB" id="P0A1P6"/>
    </source>
</evidence>
<evidence type="ECO:0000250" key="2">
    <source>
        <dbReference type="UniProtKB" id="P12425"/>
    </source>
</evidence>
<evidence type="ECO:0000250" key="3">
    <source>
        <dbReference type="UniProtKB" id="P77961"/>
    </source>
</evidence>
<evidence type="ECO:0000250" key="4">
    <source>
        <dbReference type="UniProtKB" id="P9WN39"/>
    </source>
</evidence>
<evidence type="ECO:0000255" key="5">
    <source>
        <dbReference type="PROSITE-ProRule" id="PRU01330"/>
    </source>
</evidence>
<evidence type="ECO:0000255" key="6">
    <source>
        <dbReference type="PROSITE-ProRule" id="PRU01331"/>
    </source>
</evidence>
<evidence type="ECO:0000305" key="7"/>
<accession>Q5HPN2</accession>
<sequence>MPKRSFTKDDIRKFAEEENVRYLRLQFTDILGTIKNVEVPVSQLEKVLDNEMMFDGSSIEGFVRIEESDMYLHPDLDTWVIFPWTAGQGKVARLICDVFKTDGTPFEGDPRANLKRVLRRMEDMGFTDFNLGPEPEFFLFKLDEKGEPTLELNDDGGYFDLAPTDLGENCRRDIVLELEDMGFDIEASHHEVAPGQHEIDFKYADAVTACDNIQTFKLVVKTIARKHNLHATFMPKPLFGVNGSGMHFNVSLFKGKENAFFDPEGDLQLTDTAYQFTAGVLKNARGFTAVCNPIVNSYKRLVPGYEAPCYIAWSGKNRSPLVRVPTSRGLSTRIEVRSVDPAANPYMALAAILEAGLDGIENKLEVPEPVNQNIYEMNREEREAVGIQDLPSTLYTALKAMRENKSIKNALGNHIYNQFINSKSIEWDYYRTQVSEWEREQYIKQY</sequence>
<organism>
    <name type="scientific">Staphylococcus epidermidis (strain ATCC 35984 / DSM 28319 / BCRC 17069 / CCUG 31568 / BM 3577 / RP62A)</name>
    <dbReference type="NCBI Taxonomy" id="176279"/>
    <lineage>
        <taxon>Bacteria</taxon>
        <taxon>Bacillati</taxon>
        <taxon>Bacillota</taxon>
        <taxon>Bacilli</taxon>
        <taxon>Bacillales</taxon>
        <taxon>Staphylococcaceae</taxon>
        <taxon>Staphylococcus</taxon>
    </lineage>
</organism>